<protein>
    <recommendedName>
        <fullName evidence="1">Pyridoxal 5'-phosphate synthase subunit PdxS</fullName>
        <shortName evidence="1">PLP synthase subunit PdxS</shortName>
        <ecNumber evidence="1">4.3.3.6</ecNumber>
    </recommendedName>
    <alternativeName>
        <fullName evidence="1">Pdx1</fullName>
    </alternativeName>
</protein>
<reference key="1">
    <citation type="journal article" date="2009" name="J. Bacteriol.">
        <title>Complete genome sequence of Macrococcus caseolyticus strain JCSCS5402, reflecting the ancestral genome of the human-pathogenic staphylococci.</title>
        <authorList>
            <person name="Baba T."/>
            <person name="Kuwahara-Arai K."/>
            <person name="Uchiyama I."/>
            <person name="Takeuchi F."/>
            <person name="Ito T."/>
            <person name="Hiramatsu K."/>
        </authorList>
    </citation>
    <scope>NUCLEOTIDE SEQUENCE [LARGE SCALE GENOMIC DNA]</scope>
    <source>
        <strain>JCSC5402</strain>
    </source>
</reference>
<dbReference type="EC" id="4.3.3.6" evidence="1"/>
<dbReference type="EMBL" id="AP009484">
    <property type="protein sequence ID" value="BAH18600.1"/>
    <property type="molecule type" value="Genomic_DNA"/>
</dbReference>
<dbReference type="RefSeq" id="WP_015912392.1">
    <property type="nucleotide sequence ID" value="NC_011999.1"/>
</dbReference>
<dbReference type="SMR" id="B9E8T2"/>
<dbReference type="STRING" id="458233.MCCL_1893"/>
<dbReference type="KEGG" id="mcl:MCCL_1893"/>
<dbReference type="eggNOG" id="COG0214">
    <property type="taxonomic scope" value="Bacteria"/>
</dbReference>
<dbReference type="HOGENOM" id="CLU_055352_1_0_9"/>
<dbReference type="OrthoDB" id="9772545at2"/>
<dbReference type="UniPathway" id="UPA00245"/>
<dbReference type="Proteomes" id="UP000001383">
    <property type="component" value="Chromosome"/>
</dbReference>
<dbReference type="GO" id="GO:0036381">
    <property type="term" value="F:pyridoxal 5'-phosphate synthase (glutamine hydrolysing) activity"/>
    <property type="evidence" value="ECO:0007669"/>
    <property type="project" value="UniProtKB-UniRule"/>
</dbReference>
<dbReference type="GO" id="GO:0006520">
    <property type="term" value="P:amino acid metabolic process"/>
    <property type="evidence" value="ECO:0007669"/>
    <property type="project" value="TreeGrafter"/>
</dbReference>
<dbReference type="GO" id="GO:0042823">
    <property type="term" value="P:pyridoxal phosphate biosynthetic process"/>
    <property type="evidence" value="ECO:0007669"/>
    <property type="project" value="UniProtKB-UniRule"/>
</dbReference>
<dbReference type="GO" id="GO:0008615">
    <property type="term" value="P:pyridoxine biosynthetic process"/>
    <property type="evidence" value="ECO:0007669"/>
    <property type="project" value="TreeGrafter"/>
</dbReference>
<dbReference type="CDD" id="cd04727">
    <property type="entry name" value="pdxS"/>
    <property type="match status" value="1"/>
</dbReference>
<dbReference type="FunFam" id="3.20.20.70:FF:000001">
    <property type="entry name" value="Pyridoxine biosynthesis protein PDX1"/>
    <property type="match status" value="1"/>
</dbReference>
<dbReference type="Gene3D" id="3.20.20.70">
    <property type="entry name" value="Aldolase class I"/>
    <property type="match status" value="1"/>
</dbReference>
<dbReference type="HAMAP" id="MF_01824">
    <property type="entry name" value="PdxS"/>
    <property type="match status" value="1"/>
</dbReference>
<dbReference type="InterPro" id="IPR013785">
    <property type="entry name" value="Aldolase_TIM"/>
</dbReference>
<dbReference type="InterPro" id="IPR001852">
    <property type="entry name" value="PdxS/SNZ"/>
</dbReference>
<dbReference type="InterPro" id="IPR033755">
    <property type="entry name" value="PdxS/SNZ_N"/>
</dbReference>
<dbReference type="InterPro" id="IPR011060">
    <property type="entry name" value="RibuloseP-bd_barrel"/>
</dbReference>
<dbReference type="NCBIfam" id="NF003215">
    <property type="entry name" value="PRK04180.1"/>
    <property type="match status" value="1"/>
</dbReference>
<dbReference type="NCBIfam" id="TIGR00343">
    <property type="entry name" value="pyridoxal 5'-phosphate synthase lyase subunit PdxS"/>
    <property type="match status" value="1"/>
</dbReference>
<dbReference type="PANTHER" id="PTHR31829">
    <property type="entry name" value="PYRIDOXAL 5'-PHOSPHATE SYNTHASE SUBUNIT SNZ1-RELATED"/>
    <property type="match status" value="1"/>
</dbReference>
<dbReference type="PANTHER" id="PTHR31829:SF0">
    <property type="entry name" value="PYRIDOXAL 5'-PHOSPHATE SYNTHASE SUBUNIT SNZ1-RELATED"/>
    <property type="match status" value="1"/>
</dbReference>
<dbReference type="Pfam" id="PF01680">
    <property type="entry name" value="SOR_SNZ"/>
    <property type="match status" value="1"/>
</dbReference>
<dbReference type="PIRSF" id="PIRSF029271">
    <property type="entry name" value="Pdx1"/>
    <property type="match status" value="1"/>
</dbReference>
<dbReference type="SUPFAM" id="SSF51366">
    <property type="entry name" value="Ribulose-phoshate binding barrel"/>
    <property type="match status" value="1"/>
</dbReference>
<dbReference type="PROSITE" id="PS01235">
    <property type="entry name" value="PDXS_SNZ_1"/>
    <property type="match status" value="1"/>
</dbReference>
<dbReference type="PROSITE" id="PS51129">
    <property type="entry name" value="PDXS_SNZ_2"/>
    <property type="match status" value="1"/>
</dbReference>
<organism>
    <name type="scientific">Macrococcus caseolyticus (strain JCSC5402)</name>
    <name type="common">Macrococcoides caseolyticum</name>
    <dbReference type="NCBI Taxonomy" id="458233"/>
    <lineage>
        <taxon>Bacteria</taxon>
        <taxon>Bacillati</taxon>
        <taxon>Bacillota</taxon>
        <taxon>Bacilli</taxon>
        <taxon>Bacillales</taxon>
        <taxon>Staphylococcaceae</taxon>
        <taxon>Macrococcoides</taxon>
    </lineage>
</organism>
<accession>B9E8T2</accession>
<evidence type="ECO:0000255" key="1">
    <source>
        <dbReference type="HAMAP-Rule" id="MF_01824"/>
    </source>
</evidence>
<sequence>MSKIVGSDKVKRGMAEMQKGGVIMDVVNAEQAKIAEAAGAVAVMALERVPSDIRAAGGVARMADPRIVEEVMNAVSIPVMAKGRIGHITEARVLEAMGVDYIDESEVLTPADEEFHLKKDEFTVPFVCGCRDLGEAARRIGEGAAMLRTKGEPGTGNIVEAVRHLRKVNAQVRKLTVMNDDEIMTEAKLLGAPYEVLKEIKALGKLPVVNFAAGGVATPADAALMMELGADGVFVGSGIFKSESPEKFAKAIVQATTHYQDYKLIGELSKELGAAMKGLDINKLSLEERMQERGW</sequence>
<proteinExistence type="inferred from homology"/>
<gene>
    <name evidence="1" type="primary">pdxS</name>
    <name type="ordered locus">MCCL_1893</name>
</gene>
<feature type="chain" id="PRO_1000188233" description="Pyridoxal 5'-phosphate synthase subunit PdxS">
    <location>
        <begin position="1"/>
        <end position="295"/>
    </location>
</feature>
<feature type="active site" description="Schiff-base intermediate with D-ribose 5-phosphate" evidence="1">
    <location>
        <position position="82"/>
    </location>
</feature>
<feature type="binding site" evidence="1">
    <location>
        <position position="25"/>
    </location>
    <ligand>
        <name>D-ribose 5-phosphate</name>
        <dbReference type="ChEBI" id="CHEBI:78346"/>
    </ligand>
</feature>
<feature type="binding site" evidence="1">
    <location>
        <position position="154"/>
    </location>
    <ligand>
        <name>D-ribose 5-phosphate</name>
        <dbReference type="ChEBI" id="CHEBI:78346"/>
    </ligand>
</feature>
<feature type="binding site" evidence="1">
    <location>
        <position position="166"/>
    </location>
    <ligand>
        <name>D-glyceraldehyde 3-phosphate</name>
        <dbReference type="ChEBI" id="CHEBI:59776"/>
    </ligand>
</feature>
<feature type="binding site" evidence="1">
    <location>
        <position position="215"/>
    </location>
    <ligand>
        <name>D-ribose 5-phosphate</name>
        <dbReference type="ChEBI" id="CHEBI:78346"/>
    </ligand>
</feature>
<feature type="binding site" evidence="1">
    <location>
        <begin position="236"/>
        <end position="237"/>
    </location>
    <ligand>
        <name>D-ribose 5-phosphate</name>
        <dbReference type="ChEBI" id="CHEBI:78346"/>
    </ligand>
</feature>
<comment type="function">
    <text evidence="1">Catalyzes the formation of pyridoxal 5'-phosphate from ribose 5-phosphate (RBP), glyceraldehyde 3-phosphate (G3P) and ammonia. The ammonia is provided by the PdxT subunit. Can also use ribulose 5-phosphate and dihydroxyacetone phosphate as substrates, resulting from enzyme-catalyzed isomerization of RBP and G3P, respectively.</text>
</comment>
<comment type="catalytic activity">
    <reaction evidence="1">
        <text>aldehydo-D-ribose 5-phosphate + D-glyceraldehyde 3-phosphate + L-glutamine = pyridoxal 5'-phosphate + L-glutamate + phosphate + 3 H2O + H(+)</text>
        <dbReference type="Rhea" id="RHEA:31507"/>
        <dbReference type="ChEBI" id="CHEBI:15377"/>
        <dbReference type="ChEBI" id="CHEBI:15378"/>
        <dbReference type="ChEBI" id="CHEBI:29985"/>
        <dbReference type="ChEBI" id="CHEBI:43474"/>
        <dbReference type="ChEBI" id="CHEBI:58273"/>
        <dbReference type="ChEBI" id="CHEBI:58359"/>
        <dbReference type="ChEBI" id="CHEBI:59776"/>
        <dbReference type="ChEBI" id="CHEBI:597326"/>
        <dbReference type="EC" id="4.3.3.6"/>
    </reaction>
</comment>
<comment type="pathway">
    <text evidence="1">Cofactor biosynthesis; pyridoxal 5'-phosphate biosynthesis.</text>
</comment>
<comment type="subunit">
    <text evidence="1">In the presence of PdxT, forms a dodecamer of heterodimers.</text>
</comment>
<comment type="similarity">
    <text evidence="1">Belongs to the PdxS/SNZ family.</text>
</comment>
<keyword id="KW-0456">Lyase</keyword>
<keyword id="KW-0663">Pyridoxal phosphate</keyword>
<keyword id="KW-1185">Reference proteome</keyword>
<keyword id="KW-0704">Schiff base</keyword>
<name>PDXS_MACCJ</name>